<protein>
    <recommendedName>
        <fullName>L-amino-acid oxidase</fullName>
        <shortName>LAAO</shortName>
        <shortName evidence="3">TM-LAO</shortName>
        <ecNumber evidence="1">1.4.3.2</ecNumber>
    </recommendedName>
</protein>
<name>OXLA_PROMU</name>
<comment type="function">
    <text evidence="1 2">Catalyzes an oxidative deamination of predominantly hydrophobic and aromatic L-amino acids, thus producing hydrogen peroxide that may contribute to the diverse toxic effects of this enzyme (By similarity). Exhibits diverse biological activities, such as hemorrhage, hemolysis, edema, apoptosis, and antiparasitic activities (By similarity). This protein has antibacterial activity (against E.coli, S.aureus, and B.dysenteriae), cytotoxic activity, as well as an ability to induce platelet aggregation (PubMed:12621545). Effects of snake L-amino oxidases on platelets are controversial, since they either induce aggregation or inhibit agonist-induced aggregation (By similarity). These different effects are probably due to different experimental conditions (By similarity).</text>
</comment>
<comment type="catalytic activity">
    <reaction evidence="1">
        <text>an L-alpha-amino acid + O2 + H2O = a 2-oxocarboxylate + H2O2 + NH4(+)</text>
        <dbReference type="Rhea" id="RHEA:13781"/>
        <dbReference type="ChEBI" id="CHEBI:15377"/>
        <dbReference type="ChEBI" id="CHEBI:15379"/>
        <dbReference type="ChEBI" id="CHEBI:16240"/>
        <dbReference type="ChEBI" id="CHEBI:28938"/>
        <dbReference type="ChEBI" id="CHEBI:35179"/>
        <dbReference type="ChEBI" id="CHEBI:59869"/>
        <dbReference type="EC" id="1.4.3.2"/>
    </reaction>
</comment>
<comment type="cofactor">
    <cofactor evidence="1">
        <name>FAD</name>
        <dbReference type="ChEBI" id="CHEBI:57692"/>
    </cofactor>
</comment>
<comment type="subunit">
    <text evidence="2">Homodimer; non-covalently linked.</text>
</comment>
<comment type="subcellular location">
    <subcellularLocation>
        <location evidence="2">Secreted</location>
    </subcellularLocation>
</comment>
<comment type="tissue specificity">
    <text evidence="5">Expressed by the venom gland.</text>
</comment>
<comment type="PTM">
    <text evidence="1">N-glycosylated.</text>
</comment>
<comment type="similarity">
    <text evidence="4">Belongs to the flavin monoamine oxidase family. FIG1 subfamily.</text>
</comment>
<organism>
    <name type="scientific">Protobothrops mucrosquamatus</name>
    <name type="common">Taiwan habu</name>
    <name type="synonym">Trimeresurus mucrosquamatus</name>
    <dbReference type="NCBI Taxonomy" id="103944"/>
    <lineage>
        <taxon>Eukaryota</taxon>
        <taxon>Metazoa</taxon>
        <taxon>Chordata</taxon>
        <taxon>Craniata</taxon>
        <taxon>Vertebrata</taxon>
        <taxon>Euteleostomi</taxon>
        <taxon>Lepidosauria</taxon>
        <taxon>Squamata</taxon>
        <taxon>Bifurcata</taxon>
        <taxon>Unidentata</taxon>
        <taxon>Episquamata</taxon>
        <taxon>Toxicofera</taxon>
        <taxon>Serpentes</taxon>
        <taxon>Colubroidea</taxon>
        <taxon>Viperidae</taxon>
        <taxon>Crotalinae</taxon>
        <taxon>Protobothrops</taxon>
    </lineage>
</organism>
<evidence type="ECO:0000250" key="1">
    <source>
        <dbReference type="UniProtKB" id="P81382"/>
    </source>
</evidence>
<evidence type="ECO:0000269" key="2">
    <source>
    </source>
</evidence>
<evidence type="ECO:0000303" key="3">
    <source>
    </source>
</evidence>
<evidence type="ECO:0000305" key="4"/>
<evidence type="ECO:0000305" key="5">
    <source>
    </source>
</evidence>
<dbReference type="EC" id="1.4.3.2" evidence="1"/>
<dbReference type="GO" id="GO:0005576">
    <property type="term" value="C:extracellular region"/>
    <property type="evidence" value="ECO:0007669"/>
    <property type="project" value="UniProtKB-SubCell"/>
</dbReference>
<dbReference type="GO" id="GO:0001716">
    <property type="term" value="F:L-amino-acid oxidase activity"/>
    <property type="evidence" value="ECO:0007669"/>
    <property type="project" value="UniProtKB-EC"/>
</dbReference>
<dbReference type="GO" id="GO:0090729">
    <property type="term" value="F:toxin activity"/>
    <property type="evidence" value="ECO:0007669"/>
    <property type="project" value="UniProtKB-KW"/>
</dbReference>
<dbReference type="GO" id="GO:0006915">
    <property type="term" value="P:apoptotic process"/>
    <property type="evidence" value="ECO:0007669"/>
    <property type="project" value="UniProtKB-KW"/>
</dbReference>
<dbReference type="GO" id="GO:0042742">
    <property type="term" value="P:defense response to bacterium"/>
    <property type="evidence" value="ECO:0007669"/>
    <property type="project" value="UniProtKB-KW"/>
</dbReference>
<dbReference type="GO" id="GO:0031640">
    <property type="term" value="P:killing of cells of another organism"/>
    <property type="evidence" value="ECO:0007669"/>
    <property type="project" value="UniProtKB-KW"/>
</dbReference>
<feature type="chain" id="PRO_0000273571" description="L-amino-acid oxidase">
    <location>
        <begin position="1"/>
        <end position="24" status="greater than"/>
    </location>
</feature>
<feature type="disulfide bond" evidence="1">
    <location>
        <begin position="10"/>
        <end status="unknown"/>
    </location>
</feature>
<feature type="non-terminal residue" evidence="3">
    <location>
        <position position="24"/>
    </location>
</feature>
<accession>P0C2D6</accession>
<sequence length="24" mass="2931">ADNKNPLEECFRETNYEEFLEIAR</sequence>
<proteinExistence type="evidence at protein level"/>
<reference key="1">
    <citation type="journal article" date="2003" name="Sheng Wu Hua Xue Yu Sheng Wu Wu Li Xue Bao">
        <title>Purification, characterization and biological activity of an L-amino acid oxidase from Trimeresurus mucrosquamatus venom.</title>
        <authorList>
            <person name="Wei J.-F."/>
            <person name="Wei Q."/>
            <person name="Lu Q.-M."/>
            <person name="Tai H."/>
            <person name="Jin Y."/>
            <person name="Wang W.-Y."/>
            <person name="Xiong Y.-L."/>
        </authorList>
    </citation>
    <scope>PROTEIN SEQUENCE</scope>
    <scope>FUNCTION</scope>
    <scope>SUBUNIT</scope>
    <scope>SUBCELLULAR LOCATION</scope>
    <source>
        <tissue>Venom</tissue>
    </source>
</reference>
<keyword id="KW-0044">Antibiotic</keyword>
<keyword id="KW-0929">Antimicrobial</keyword>
<keyword id="KW-0053">Apoptosis</keyword>
<keyword id="KW-0204">Cytolysis</keyword>
<keyword id="KW-0903">Direct protein sequencing</keyword>
<keyword id="KW-1015">Disulfide bond</keyword>
<keyword id="KW-0274">FAD</keyword>
<keyword id="KW-0285">Flavoprotein</keyword>
<keyword id="KW-0325">Glycoprotein</keyword>
<keyword id="KW-0354">Hemolysis</keyword>
<keyword id="KW-1199">Hemostasis impairing toxin</keyword>
<keyword id="KW-0560">Oxidoreductase</keyword>
<keyword id="KW-1202">Platelet aggregation activating toxin</keyword>
<keyword id="KW-0964">Secreted</keyword>
<keyword id="KW-0800">Toxin</keyword>